<comment type="function">
    <text evidence="6">Component of the mitochondrial ribosome (mitoribosome), a dedicated translation machinery responsible for the synthesis of mitochondrial genome-encoded proteins, including at least some of the essential transmembrane subunits of the mitochondrial respiratory chain. The mitoribosomes are attached to the mitochondrial inner membrane and translation products are cotranslationally integrated into the membrane.</text>
</comment>
<comment type="subunit">
    <text evidence="2 3">Component of the mitochondrial large ribosomal subunit (mt-LSU). Mature N.crassa 74S mitochondrial ribosomes consist of a small (37S) and a large (54S) subunit. The 37S small subunit contains a 16S ribosomal RNA (16S mt-rRNA) and 32 different proteins. The 54S large subunit contains a 23S rRNA (23S mt-rRNA) and 42 different proteins.</text>
</comment>
<comment type="subcellular location">
    <subcellularLocation>
        <location evidence="2 3">Mitochondrion</location>
    </subcellularLocation>
</comment>
<comment type="similarity">
    <text evidence="5">Belongs to the mitochondrion-specific ribosomal protein mL59 family.</text>
</comment>
<name>RM25_NEUCR</name>
<proteinExistence type="evidence at protein level"/>
<dbReference type="EMBL" id="CM002236">
    <property type="protein sequence ID" value="EAA35224.1"/>
    <property type="molecule type" value="Genomic_DNA"/>
</dbReference>
<dbReference type="RefSeq" id="XP_964460.1">
    <property type="nucleotide sequence ID" value="XM_959367.2"/>
</dbReference>
<dbReference type="PDB" id="6YWE">
    <property type="method" value="EM"/>
    <property type="resolution" value="2.99 A"/>
    <property type="chains" value="b=2-163"/>
</dbReference>
<dbReference type="PDB" id="6YWS">
    <property type="method" value="EM"/>
    <property type="resolution" value="2.74 A"/>
    <property type="chains" value="b=2-163"/>
</dbReference>
<dbReference type="PDB" id="6YWV">
    <property type="method" value="EM"/>
    <property type="resolution" value="3.03 A"/>
    <property type="chains" value="b=2-163"/>
</dbReference>
<dbReference type="PDB" id="6YWX">
    <property type="method" value="EM"/>
    <property type="resolution" value="3.10 A"/>
    <property type="chains" value="b=2-163"/>
</dbReference>
<dbReference type="PDB" id="6YWY">
    <property type="method" value="EM"/>
    <property type="resolution" value="3.05 A"/>
    <property type="chains" value="b=2-163"/>
</dbReference>
<dbReference type="PDBsum" id="6YWE"/>
<dbReference type="PDBsum" id="6YWS"/>
<dbReference type="PDBsum" id="6YWV"/>
<dbReference type="PDBsum" id="6YWX"/>
<dbReference type="PDBsum" id="6YWY"/>
<dbReference type="EMDB" id="EMD-10977"/>
<dbReference type="EMDB" id="EMD-10978"/>
<dbReference type="SMR" id="Q7SEK9"/>
<dbReference type="FunCoup" id="Q7SEK9">
    <property type="interactions" value="80"/>
</dbReference>
<dbReference type="STRING" id="367110.Q7SEK9"/>
<dbReference type="PaxDb" id="5141-EFNCRP00000002459"/>
<dbReference type="EnsemblFungi" id="EAA35224">
    <property type="protein sequence ID" value="EAA35224"/>
    <property type="gene ID" value="NCU02804"/>
</dbReference>
<dbReference type="GeneID" id="3880600"/>
<dbReference type="KEGG" id="ncr:NCU02804"/>
<dbReference type="VEuPathDB" id="FungiDB:NCU02804"/>
<dbReference type="HOGENOM" id="CLU_076154_1_0_1"/>
<dbReference type="InParanoid" id="Q7SEK9"/>
<dbReference type="OMA" id="KGHKHEL"/>
<dbReference type="OrthoDB" id="18529at2759"/>
<dbReference type="Proteomes" id="UP000001805">
    <property type="component" value="Chromosome 1, Linkage Group I"/>
</dbReference>
<dbReference type="GO" id="GO:0005762">
    <property type="term" value="C:mitochondrial large ribosomal subunit"/>
    <property type="evidence" value="ECO:0000318"/>
    <property type="project" value="GO_Central"/>
</dbReference>
<dbReference type="GO" id="GO:0003735">
    <property type="term" value="F:structural constituent of ribosome"/>
    <property type="evidence" value="ECO:0000318"/>
    <property type="project" value="GO_Central"/>
</dbReference>
<dbReference type="InterPro" id="IPR037507">
    <property type="entry name" value="Ribosomal_mL59"/>
</dbReference>
<dbReference type="InterPro" id="IPR040922">
    <property type="entry name" value="Ribosomal_mL59_dom"/>
</dbReference>
<dbReference type="PANTHER" id="PTHR28041">
    <property type="entry name" value="54S RIBOSOMAL PROTEIN L25, MITOCHONDRIAL"/>
    <property type="match status" value="1"/>
</dbReference>
<dbReference type="PANTHER" id="PTHR28041:SF1">
    <property type="entry name" value="LARGE RIBOSOMAL SUBUNIT PROTEIN ML59"/>
    <property type="match status" value="1"/>
</dbReference>
<dbReference type="Pfam" id="PF18126">
    <property type="entry name" value="Mitoc_mL59"/>
    <property type="match status" value="1"/>
</dbReference>
<sequence>MAATVKQHVQLALSLPPRLRTFLARYPPASILPAGADPETHKTPYQEESPNPFMPTKHPITGKWHNPKYSLRRQAELVKLAQEHGVEELLPFTRKLNEEKLRKRVELGLRVKGTGVGEKVKGHKHERTLVAKMEKRREAMLAMPDLIREWKKVGKRNWTKFPK</sequence>
<protein>
    <recommendedName>
        <fullName evidence="4">Large ribosomal subunit protein mL59</fullName>
    </recommendedName>
</protein>
<evidence type="ECO:0000256" key="1">
    <source>
        <dbReference type="SAM" id="MobiDB-lite"/>
    </source>
</evidence>
<evidence type="ECO:0000269" key="2">
    <source>
    </source>
</evidence>
<evidence type="ECO:0000269" key="3">
    <source>
    </source>
</evidence>
<evidence type="ECO:0000303" key="4">
    <source>
    </source>
</evidence>
<evidence type="ECO:0000305" key="5"/>
<evidence type="ECO:0000305" key="6">
    <source>
    </source>
</evidence>
<evidence type="ECO:0007744" key="7">
    <source>
        <dbReference type="PDB" id="6YWV"/>
    </source>
</evidence>
<evidence type="ECO:0007744" key="8">
    <source>
        <dbReference type="PDB" id="6YWX"/>
    </source>
</evidence>
<gene>
    <name type="primary">mrpl25</name>
    <name type="ORF">NCU02804</name>
</gene>
<keyword id="KW-0002">3D-structure</keyword>
<keyword id="KW-0496">Mitochondrion</keyword>
<keyword id="KW-1185">Reference proteome</keyword>
<keyword id="KW-0687">Ribonucleoprotein</keyword>
<keyword id="KW-0689">Ribosomal protein</keyword>
<organism>
    <name type="scientific">Neurospora crassa (strain ATCC 24698 / 74-OR23-1A / CBS 708.71 / DSM 1257 / FGSC 987)</name>
    <dbReference type="NCBI Taxonomy" id="367110"/>
    <lineage>
        <taxon>Eukaryota</taxon>
        <taxon>Fungi</taxon>
        <taxon>Dikarya</taxon>
        <taxon>Ascomycota</taxon>
        <taxon>Pezizomycotina</taxon>
        <taxon>Sordariomycetes</taxon>
        <taxon>Sordariomycetidae</taxon>
        <taxon>Sordariales</taxon>
        <taxon>Sordariaceae</taxon>
        <taxon>Neurospora</taxon>
    </lineage>
</organism>
<feature type="chain" id="PRO_0000458594" description="Large ribosomal subunit protein mL59">
    <location>
        <begin position="1"/>
        <end position="163"/>
    </location>
</feature>
<feature type="region of interest" description="Disordered" evidence="1">
    <location>
        <begin position="33"/>
        <end position="53"/>
    </location>
</feature>
<reference key="1">
    <citation type="journal article" date="2003" name="Nature">
        <title>The genome sequence of the filamentous fungus Neurospora crassa.</title>
        <authorList>
            <person name="Galagan J.E."/>
            <person name="Calvo S.E."/>
            <person name="Borkovich K.A."/>
            <person name="Selker E.U."/>
            <person name="Read N.D."/>
            <person name="Jaffe D.B."/>
            <person name="FitzHugh W."/>
            <person name="Ma L.-J."/>
            <person name="Smirnov S."/>
            <person name="Purcell S."/>
            <person name="Rehman B."/>
            <person name="Elkins T."/>
            <person name="Engels R."/>
            <person name="Wang S."/>
            <person name="Nielsen C.B."/>
            <person name="Butler J."/>
            <person name="Endrizzi M."/>
            <person name="Qui D."/>
            <person name="Ianakiev P."/>
            <person name="Bell-Pedersen D."/>
            <person name="Nelson M.A."/>
            <person name="Werner-Washburne M."/>
            <person name="Selitrennikoff C.P."/>
            <person name="Kinsey J.A."/>
            <person name="Braun E.L."/>
            <person name="Zelter A."/>
            <person name="Schulte U."/>
            <person name="Kothe G.O."/>
            <person name="Jedd G."/>
            <person name="Mewes H.-W."/>
            <person name="Staben C."/>
            <person name="Marcotte E."/>
            <person name="Greenberg D."/>
            <person name="Roy A."/>
            <person name="Foley K."/>
            <person name="Naylor J."/>
            <person name="Stange-Thomann N."/>
            <person name="Barrett R."/>
            <person name="Gnerre S."/>
            <person name="Kamal M."/>
            <person name="Kamvysselis M."/>
            <person name="Mauceli E.W."/>
            <person name="Bielke C."/>
            <person name="Rudd S."/>
            <person name="Frishman D."/>
            <person name="Krystofova S."/>
            <person name="Rasmussen C."/>
            <person name="Metzenberg R.L."/>
            <person name="Perkins D.D."/>
            <person name="Kroken S."/>
            <person name="Cogoni C."/>
            <person name="Macino G."/>
            <person name="Catcheside D.E.A."/>
            <person name="Li W."/>
            <person name="Pratt R.J."/>
            <person name="Osmani S.A."/>
            <person name="DeSouza C.P.C."/>
            <person name="Glass N.L."/>
            <person name="Orbach M.J."/>
            <person name="Berglund J.A."/>
            <person name="Voelker R."/>
            <person name="Yarden O."/>
            <person name="Plamann M."/>
            <person name="Seiler S."/>
            <person name="Dunlap J.C."/>
            <person name="Radford A."/>
            <person name="Aramayo R."/>
            <person name="Natvig D.O."/>
            <person name="Alex L.A."/>
            <person name="Mannhaupt G."/>
            <person name="Ebbole D.J."/>
            <person name="Freitag M."/>
            <person name="Paulsen I."/>
            <person name="Sachs M.S."/>
            <person name="Lander E.S."/>
            <person name="Nusbaum C."/>
            <person name="Birren B.W."/>
        </authorList>
    </citation>
    <scope>NUCLEOTIDE SEQUENCE [LARGE SCALE GENOMIC DNA]</scope>
    <source>
        <strain>ATCC 24698 / 74-OR23-1A / CBS 708.71 / DSM 1257 / FGSC 987</strain>
    </source>
</reference>
<reference key="2">
    <citation type="journal article" date="2006" name="FEMS Microbiol. Lett.">
        <title>Identification and comparative analysis of the large subunit mitochondrial ribosomal proteins of Neurospora crassa.</title>
        <authorList>
            <person name="Gan X."/>
            <person name="Arita K."/>
            <person name="Isono S."/>
            <person name="Kitakawa M."/>
            <person name="Yoshino K."/>
            <person name="Yonezawa K."/>
            <person name="Kato A."/>
            <person name="Inoue H."/>
            <person name="Isono K."/>
        </authorList>
    </citation>
    <scope>IDENTIFICATION IN THE MITOCHONDRIAL RIBOSOMAL LARGE COMPLEX</scope>
    <scope>IDENTIFICATION BY MASS SPECTROMETRY</scope>
</reference>
<reference evidence="7 8" key="3">
    <citation type="journal article" date="2020" name="Nat. Commun.">
        <title>Analysis of translating mitoribosome reveals functional characteristics of translation in mitochondria of fungi.</title>
        <authorList>
            <person name="Itoh Y."/>
            <person name="Naschberger A."/>
            <person name="Mortezaei N."/>
            <person name="Herrmann J.M."/>
            <person name="Amunts A."/>
        </authorList>
    </citation>
    <scope>STRUCTURE BY ELECTRON MICROSCOPY (2.74 ANGSTROMS) OF 2-163</scope>
</reference>
<accession>Q7SEK9</accession>